<accession>O34414</accession>
<sequence length="226" mass="26929">MKQNKPKFQVGDIVVVIMYGTVGTITKVHQIDKHYLYEVNHNEVLYFESSIQLYKDYEGVIVDMEKLDIEYEFLIGDVVYVKDYGKELFRIIGHRTEIWRYLEDGWEDIIYELTRLKDGEWLETEEEDLTLVLRKYEMDQFVHQLLFVHYVGETGHEIGEDIASSALLQFEGGDEDQDTLHILAVSIVDELLDIYNDYKILYEMFQDEEYKDMMMFVLESLKEHFS</sequence>
<keyword id="KW-1185">Reference proteome</keyword>
<dbReference type="EMBL" id="AF015775">
    <property type="protein sequence ID" value="AAB72068.1"/>
    <property type="molecule type" value="Genomic_DNA"/>
</dbReference>
<dbReference type="EMBL" id="AF006665">
    <property type="protein sequence ID" value="AAB81161.1"/>
    <property type="molecule type" value="Genomic_DNA"/>
</dbReference>
<dbReference type="EMBL" id="AL009126">
    <property type="protein sequence ID" value="CAB13858.1"/>
    <property type="molecule type" value="Genomic_DNA"/>
</dbReference>
<dbReference type="PIR" id="A69904">
    <property type="entry name" value="A69904"/>
</dbReference>
<dbReference type="RefSeq" id="NP_389848.1">
    <property type="nucleotide sequence ID" value="NC_000964.3"/>
</dbReference>
<dbReference type="RefSeq" id="WP_003231162.1">
    <property type="nucleotide sequence ID" value="NZ_OZ025638.1"/>
</dbReference>
<dbReference type="SMR" id="O34414"/>
<dbReference type="FunCoup" id="O34414">
    <property type="interactions" value="5"/>
</dbReference>
<dbReference type="STRING" id="224308.BSU19670"/>
<dbReference type="PaxDb" id="224308-BSU19670"/>
<dbReference type="EnsemblBacteria" id="CAB13858">
    <property type="protein sequence ID" value="CAB13858"/>
    <property type="gene ID" value="BSU_19670"/>
</dbReference>
<dbReference type="GeneID" id="940037"/>
<dbReference type="KEGG" id="bsu:BSU19670"/>
<dbReference type="PATRIC" id="fig|224308.179.peg.2153"/>
<dbReference type="eggNOG" id="ENOG5033JW0">
    <property type="taxonomic scope" value="Bacteria"/>
</dbReference>
<dbReference type="InParanoid" id="O34414"/>
<dbReference type="OrthoDB" id="2629010at2"/>
<dbReference type="BioCyc" id="BSUB:BSU19670-MONOMER"/>
<dbReference type="Proteomes" id="UP000001570">
    <property type="component" value="Chromosome"/>
</dbReference>
<protein>
    <recommendedName>
        <fullName>Uncharacterized protein YodN</fullName>
    </recommendedName>
</protein>
<proteinExistence type="predicted"/>
<name>YODN_BACSU</name>
<organism>
    <name type="scientific">Bacillus subtilis (strain 168)</name>
    <dbReference type="NCBI Taxonomy" id="224308"/>
    <lineage>
        <taxon>Bacteria</taxon>
        <taxon>Bacillati</taxon>
        <taxon>Bacillota</taxon>
        <taxon>Bacilli</taxon>
        <taxon>Bacillales</taxon>
        <taxon>Bacillaceae</taxon>
        <taxon>Bacillus</taxon>
    </lineage>
</organism>
<reference key="1">
    <citation type="journal article" date="1998" name="DNA Res.">
        <title>Sequence analysis of the Bacillus subtilis 168 chromosome region between the sspC and odhA loci (184 degrees-180 degrees).</title>
        <authorList>
            <person name="Ghim S.-Y."/>
            <person name="Choi S.-K."/>
            <person name="Shin B.-S."/>
            <person name="Jeong Y.-M."/>
            <person name="Sorokin A."/>
            <person name="Ehrlich S.D."/>
            <person name="Park S.-H."/>
        </authorList>
    </citation>
    <scope>NUCLEOTIDE SEQUENCE [GENOMIC DNA]</scope>
    <source>
        <strain>168</strain>
    </source>
</reference>
<reference key="2">
    <citation type="journal article" date="1997" name="Nature">
        <title>The complete genome sequence of the Gram-positive bacterium Bacillus subtilis.</title>
        <authorList>
            <person name="Kunst F."/>
            <person name="Ogasawara N."/>
            <person name="Moszer I."/>
            <person name="Albertini A.M."/>
            <person name="Alloni G."/>
            <person name="Azevedo V."/>
            <person name="Bertero M.G."/>
            <person name="Bessieres P."/>
            <person name="Bolotin A."/>
            <person name="Borchert S."/>
            <person name="Borriss R."/>
            <person name="Boursier L."/>
            <person name="Brans A."/>
            <person name="Braun M."/>
            <person name="Brignell S.C."/>
            <person name="Bron S."/>
            <person name="Brouillet S."/>
            <person name="Bruschi C.V."/>
            <person name="Caldwell B."/>
            <person name="Capuano V."/>
            <person name="Carter N.M."/>
            <person name="Choi S.-K."/>
            <person name="Codani J.-J."/>
            <person name="Connerton I.F."/>
            <person name="Cummings N.J."/>
            <person name="Daniel R.A."/>
            <person name="Denizot F."/>
            <person name="Devine K.M."/>
            <person name="Duesterhoeft A."/>
            <person name="Ehrlich S.D."/>
            <person name="Emmerson P.T."/>
            <person name="Entian K.-D."/>
            <person name="Errington J."/>
            <person name="Fabret C."/>
            <person name="Ferrari E."/>
            <person name="Foulger D."/>
            <person name="Fritz C."/>
            <person name="Fujita M."/>
            <person name="Fujita Y."/>
            <person name="Fuma S."/>
            <person name="Galizzi A."/>
            <person name="Galleron N."/>
            <person name="Ghim S.-Y."/>
            <person name="Glaser P."/>
            <person name="Goffeau A."/>
            <person name="Golightly E.J."/>
            <person name="Grandi G."/>
            <person name="Guiseppi G."/>
            <person name="Guy B.J."/>
            <person name="Haga K."/>
            <person name="Haiech J."/>
            <person name="Harwood C.R."/>
            <person name="Henaut A."/>
            <person name="Hilbert H."/>
            <person name="Holsappel S."/>
            <person name="Hosono S."/>
            <person name="Hullo M.-F."/>
            <person name="Itaya M."/>
            <person name="Jones L.-M."/>
            <person name="Joris B."/>
            <person name="Karamata D."/>
            <person name="Kasahara Y."/>
            <person name="Klaerr-Blanchard M."/>
            <person name="Klein C."/>
            <person name="Kobayashi Y."/>
            <person name="Koetter P."/>
            <person name="Koningstein G."/>
            <person name="Krogh S."/>
            <person name="Kumano M."/>
            <person name="Kurita K."/>
            <person name="Lapidus A."/>
            <person name="Lardinois S."/>
            <person name="Lauber J."/>
            <person name="Lazarevic V."/>
            <person name="Lee S.-M."/>
            <person name="Levine A."/>
            <person name="Liu H."/>
            <person name="Masuda S."/>
            <person name="Mauel C."/>
            <person name="Medigue C."/>
            <person name="Medina N."/>
            <person name="Mellado R.P."/>
            <person name="Mizuno M."/>
            <person name="Moestl D."/>
            <person name="Nakai S."/>
            <person name="Noback M."/>
            <person name="Noone D."/>
            <person name="O'Reilly M."/>
            <person name="Ogawa K."/>
            <person name="Ogiwara A."/>
            <person name="Oudega B."/>
            <person name="Park S.-H."/>
            <person name="Parro V."/>
            <person name="Pohl T.M."/>
            <person name="Portetelle D."/>
            <person name="Porwollik S."/>
            <person name="Prescott A.M."/>
            <person name="Presecan E."/>
            <person name="Pujic P."/>
            <person name="Purnelle B."/>
            <person name="Rapoport G."/>
            <person name="Rey M."/>
            <person name="Reynolds S."/>
            <person name="Rieger M."/>
            <person name="Rivolta C."/>
            <person name="Rocha E."/>
            <person name="Roche B."/>
            <person name="Rose M."/>
            <person name="Sadaie Y."/>
            <person name="Sato T."/>
            <person name="Scanlan E."/>
            <person name="Schleich S."/>
            <person name="Schroeter R."/>
            <person name="Scoffone F."/>
            <person name="Sekiguchi J."/>
            <person name="Sekowska A."/>
            <person name="Seror S.J."/>
            <person name="Serror P."/>
            <person name="Shin B.-S."/>
            <person name="Soldo B."/>
            <person name="Sorokin A."/>
            <person name="Tacconi E."/>
            <person name="Takagi T."/>
            <person name="Takahashi H."/>
            <person name="Takemaru K."/>
            <person name="Takeuchi M."/>
            <person name="Tamakoshi A."/>
            <person name="Tanaka T."/>
            <person name="Terpstra P."/>
            <person name="Tognoni A."/>
            <person name="Tosato V."/>
            <person name="Uchiyama S."/>
            <person name="Vandenbol M."/>
            <person name="Vannier F."/>
            <person name="Vassarotti A."/>
            <person name="Viari A."/>
            <person name="Wambutt R."/>
            <person name="Wedler E."/>
            <person name="Wedler H."/>
            <person name="Weitzenegger T."/>
            <person name="Winters P."/>
            <person name="Wipat A."/>
            <person name="Yamamoto H."/>
            <person name="Yamane K."/>
            <person name="Yasumoto K."/>
            <person name="Yata K."/>
            <person name="Yoshida K."/>
            <person name="Yoshikawa H.-F."/>
            <person name="Zumstein E."/>
            <person name="Yoshikawa H."/>
            <person name="Danchin A."/>
        </authorList>
    </citation>
    <scope>NUCLEOTIDE SEQUENCE [LARGE SCALE GENOMIC DNA]</scope>
    <source>
        <strain>168</strain>
    </source>
</reference>
<feature type="chain" id="PRO_0000049659" description="Uncharacterized protein YodN">
    <location>
        <begin position="1"/>
        <end position="226"/>
    </location>
</feature>
<gene>
    <name type="primary">yodN</name>
    <name type="synonym">yokV</name>
    <name type="ordered locus">BSU19670</name>
</gene>